<dbReference type="EMBL" id="J04641">
    <property type="protein sequence ID" value="AAA29860.1"/>
    <property type="molecule type" value="mRNA"/>
</dbReference>
<dbReference type="EMBL" id="J04642">
    <property type="protein sequence ID" value="AAA29861.1"/>
    <property type="molecule type" value="Genomic_DNA"/>
</dbReference>
<dbReference type="PIR" id="A30792">
    <property type="entry name" value="A30792"/>
</dbReference>
<dbReference type="SMR" id="P13566"/>
<dbReference type="STRING" id="6183.P13566"/>
<dbReference type="EnsemblMetazoa" id="Smp_033000.1">
    <property type="protein sequence ID" value="Smp_033000.1"/>
    <property type="gene ID" value="Smp_033000"/>
</dbReference>
<dbReference type="WBParaSite" id="Smp_033000.1">
    <property type="protein sequence ID" value="Smp_033000.1"/>
    <property type="gene ID" value="Smp_033000"/>
</dbReference>
<dbReference type="HOGENOM" id="CLU_2779054_0_0_1"/>
<dbReference type="InParanoid" id="P13566"/>
<dbReference type="OMA" id="IGAYHIT"/>
<dbReference type="PhylomeDB" id="P13566"/>
<dbReference type="Proteomes" id="UP000008854">
    <property type="component" value="Unassembled WGS sequence"/>
</dbReference>
<dbReference type="ExpressionAtlas" id="P13566">
    <property type="expression patterns" value="baseline and differential"/>
</dbReference>
<dbReference type="GO" id="GO:0005509">
    <property type="term" value="F:calcium ion binding"/>
    <property type="evidence" value="ECO:0007669"/>
    <property type="project" value="InterPro"/>
</dbReference>
<dbReference type="CDD" id="cd00051">
    <property type="entry name" value="EFh"/>
    <property type="match status" value="1"/>
</dbReference>
<dbReference type="Gene3D" id="1.10.238.10">
    <property type="entry name" value="EF-hand"/>
    <property type="match status" value="1"/>
</dbReference>
<dbReference type="InterPro" id="IPR011992">
    <property type="entry name" value="EF-hand-dom_pair"/>
</dbReference>
<dbReference type="InterPro" id="IPR018247">
    <property type="entry name" value="EF_Hand_1_Ca_BS"/>
</dbReference>
<dbReference type="InterPro" id="IPR002048">
    <property type="entry name" value="EF_hand_dom"/>
</dbReference>
<dbReference type="Pfam" id="PF13499">
    <property type="entry name" value="EF-hand_7"/>
    <property type="match status" value="1"/>
</dbReference>
<dbReference type="SMART" id="SM00054">
    <property type="entry name" value="EFh"/>
    <property type="match status" value="2"/>
</dbReference>
<dbReference type="SUPFAM" id="SSF47473">
    <property type="entry name" value="EF-hand"/>
    <property type="match status" value="1"/>
</dbReference>
<dbReference type="PROSITE" id="PS00018">
    <property type="entry name" value="EF_HAND_1"/>
    <property type="match status" value="2"/>
</dbReference>
<dbReference type="PROSITE" id="PS50222">
    <property type="entry name" value="EF_HAND_2"/>
    <property type="match status" value="2"/>
</dbReference>
<reference key="1">
    <citation type="journal article" date="1989" name="Mol. Biochem. Parasitol.">
        <title>Rapid changes in the expression of a gene encoding a calcium-binding protein in Schistosoma mansoni.</title>
        <authorList>
            <person name="Ram D."/>
            <person name="Grossman Z."/>
            <person name="Markovics A."/>
            <person name="Avivi A."/>
            <person name="Ziv E."/>
            <person name="Lantner F."/>
            <person name="Schechter I."/>
        </authorList>
    </citation>
    <scope>NUCLEOTIDE SEQUENCE [GENOMIC DNA / MRNA]</scope>
</reference>
<keyword id="KW-0106">Calcium</keyword>
<keyword id="KW-0479">Metal-binding</keyword>
<keyword id="KW-1185">Reference proteome</keyword>
<keyword id="KW-0677">Repeat</keyword>
<evidence type="ECO:0000255" key="1">
    <source>
        <dbReference type="PROSITE-ProRule" id="PRU00448"/>
    </source>
</evidence>
<comment type="developmental stage">
    <text>This protein is expressed in the cercaria but not in the sporocyst or adult worm.</text>
</comment>
<feature type="chain" id="PRO_0000073732" description="Calcium-binding protein">
    <location>
        <begin position="1"/>
        <end position="69"/>
    </location>
</feature>
<feature type="domain" description="EF-hand 1" evidence="1">
    <location>
        <begin position="2"/>
        <end position="37"/>
    </location>
</feature>
<feature type="domain" description="EF-hand 2" evidence="1">
    <location>
        <begin position="38"/>
        <end position="69"/>
    </location>
</feature>
<feature type="binding site" evidence="1">
    <location>
        <position position="15"/>
    </location>
    <ligand>
        <name>Ca(2+)</name>
        <dbReference type="ChEBI" id="CHEBI:29108"/>
        <label>1</label>
    </ligand>
</feature>
<feature type="binding site" evidence="1">
    <location>
        <position position="17"/>
    </location>
    <ligand>
        <name>Ca(2+)</name>
        <dbReference type="ChEBI" id="CHEBI:29108"/>
        <label>1</label>
    </ligand>
</feature>
<feature type="binding site" evidence="1">
    <location>
        <position position="19"/>
    </location>
    <ligand>
        <name>Ca(2+)</name>
        <dbReference type="ChEBI" id="CHEBI:29108"/>
        <label>1</label>
    </ligand>
</feature>
<feature type="binding site" evidence="1">
    <location>
        <position position="21"/>
    </location>
    <ligand>
        <name>Ca(2+)</name>
        <dbReference type="ChEBI" id="CHEBI:29108"/>
        <label>1</label>
    </ligand>
</feature>
<feature type="binding site" evidence="1">
    <location>
        <position position="26"/>
    </location>
    <ligand>
        <name>Ca(2+)</name>
        <dbReference type="ChEBI" id="CHEBI:29108"/>
        <label>1</label>
    </ligand>
</feature>
<feature type="binding site" evidence="1">
    <location>
        <position position="51"/>
    </location>
    <ligand>
        <name>Ca(2+)</name>
        <dbReference type="ChEBI" id="CHEBI:29108"/>
        <label>2</label>
    </ligand>
</feature>
<feature type="binding site" evidence="1">
    <location>
        <position position="53"/>
    </location>
    <ligand>
        <name>Ca(2+)</name>
        <dbReference type="ChEBI" id="CHEBI:29108"/>
        <label>2</label>
    </ligand>
</feature>
<feature type="binding site" evidence="1">
    <location>
        <position position="55"/>
    </location>
    <ligand>
        <name>Ca(2+)</name>
        <dbReference type="ChEBI" id="CHEBI:29108"/>
        <label>2</label>
    </ligand>
</feature>
<feature type="binding site" evidence="1">
    <location>
        <position position="57"/>
    </location>
    <ligand>
        <name>Ca(2+)</name>
        <dbReference type="ChEBI" id="CHEBI:29108"/>
        <label>2</label>
    </ligand>
</feature>
<feature type="binding site" evidence="1">
    <location>
        <position position="62"/>
    </location>
    <ligand>
        <name>Ca(2+)</name>
        <dbReference type="ChEBI" id="CHEBI:29108"/>
        <label>2</label>
    </ligand>
</feature>
<sequence length="69" mass="7944">MVNRTEAAQLLKHLDRDKSGKISSQELMEFLHTVNCPFKKEQVEKFIKQHDKDGDGQLNTDELLDVLCS</sequence>
<organism>
    <name type="scientific">Schistosoma mansoni</name>
    <name type="common">Blood fluke</name>
    <dbReference type="NCBI Taxonomy" id="6183"/>
    <lineage>
        <taxon>Eukaryota</taxon>
        <taxon>Metazoa</taxon>
        <taxon>Spiralia</taxon>
        <taxon>Lophotrochozoa</taxon>
        <taxon>Platyhelminthes</taxon>
        <taxon>Trematoda</taxon>
        <taxon>Digenea</taxon>
        <taxon>Strigeidida</taxon>
        <taxon>Schistosomatoidea</taxon>
        <taxon>Schistosomatidae</taxon>
        <taxon>Schistosoma</taxon>
    </lineage>
</organism>
<accession>P13566</accession>
<proteinExistence type="evidence at transcript level"/>
<name>CABP_SCHMA</name>
<protein>
    <recommendedName>
        <fullName>Calcium-binding protein</fullName>
        <shortName>CaBP</shortName>
    </recommendedName>
</protein>